<reference key="1">
    <citation type="journal article" date="2006" name="Genome Biol.">
        <title>Genomic analysis reveals that Pseudomonas aeruginosa virulence is combinatorial.</title>
        <authorList>
            <person name="Lee D.G."/>
            <person name="Urbach J.M."/>
            <person name="Wu G."/>
            <person name="Liberati N.T."/>
            <person name="Feinbaum R.L."/>
            <person name="Miyata S."/>
            <person name="Diggins L.T."/>
            <person name="He J."/>
            <person name="Saucier M."/>
            <person name="Deziel E."/>
            <person name="Friedman L."/>
            <person name="Li L."/>
            <person name="Grills G."/>
            <person name="Montgomery K."/>
            <person name="Kucherlapati R."/>
            <person name="Rahme L.G."/>
            <person name="Ausubel F.M."/>
        </authorList>
    </citation>
    <scope>NUCLEOTIDE SEQUENCE [LARGE SCALE GENOMIC DNA]</scope>
    <source>
        <strain>UCBPP-PA14</strain>
    </source>
</reference>
<organism>
    <name type="scientific">Pseudomonas aeruginosa (strain UCBPP-PA14)</name>
    <dbReference type="NCBI Taxonomy" id="208963"/>
    <lineage>
        <taxon>Bacteria</taxon>
        <taxon>Pseudomonadati</taxon>
        <taxon>Pseudomonadota</taxon>
        <taxon>Gammaproteobacteria</taxon>
        <taxon>Pseudomonadales</taxon>
        <taxon>Pseudomonadaceae</taxon>
        <taxon>Pseudomonas</taxon>
    </lineage>
</organism>
<dbReference type="EMBL" id="CP000438">
    <property type="protein sequence ID" value="ABJ13527.1"/>
    <property type="molecule type" value="Genomic_DNA"/>
</dbReference>
<dbReference type="RefSeq" id="WP_003093723.1">
    <property type="nucleotide sequence ID" value="NZ_CP034244.1"/>
</dbReference>
<dbReference type="SMR" id="Q02T73"/>
<dbReference type="KEGG" id="pau:PA14_08920"/>
<dbReference type="PseudoCAP" id="PA14_08920"/>
<dbReference type="HOGENOM" id="CLU_078858_2_1_6"/>
<dbReference type="BioCyc" id="PAER208963:G1G74-743-MONOMER"/>
<dbReference type="Proteomes" id="UP000000653">
    <property type="component" value="Chromosome"/>
</dbReference>
<dbReference type="GO" id="GO:0022625">
    <property type="term" value="C:cytosolic large ribosomal subunit"/>
    <property type="evidence" value="ECO:0007669"/>
    <property type="project" value="TreeGrafter"/>
</dbReference>
<dbReference type="GO" id="GO:0019843">
    <property type="term" value="F:rRNA binding"/>
    <property type="evidence" value="ECO:0007669"/>
    <property type="project" value="UniProtKB-UniRule"/>
</dbReference>
<dbReference type="GO" id="GO:0003735">
    <property type="term" value="F:structural constituent of ribosome"/>
    <property type="evidence" value="ECO:0007669"/>
    <property type="project" value="InterPro"/>
</dbReference>
<dbReference type="GO" id="GO:0000049">
    <property type="term" value="F:tRNA binding"/>
    <property type="evidence" value="ECO:0007669"/>
    <property type="project" value="UniProtKB-KW"/>
</dbReference>
<dbReference type="GO" id="GO:0006412">
    <property type="term" value="P:translation"/>
    <property type="evidence" value="ECO:0007669"/>
    <property type="project" value="UniProtKB-UniRule"/>
</dbReference>
<dbReference type="CDD" id="cd01433">
    <property type="entry name" value="Ribosomal_L16_L10e"/>
    <property type="match status" value="1"/>
</dbReference>
<dbReference type="FunFam" id="3.90.1170.10:FF:000001">
    <property type="entry name" value="50S ribosomal protein L16"/>
    <property type="match status" value="1"/>
</dbReference>
<dbReference type="Gene3D" id="3.90.1170.10">
    <property type="entry name" value="Ribosomal protein L10e/L16"/>
    <property type="match status" value="1"/>
</dbReference>
<dbReference type="HAMAP" id="MF_01342">
    <property type="entry name" value="Ribosomal_uL16"/>
    <property type="match status" value="1"/>
</dbReference>
<dbReference type="InterPro" id="IPR047873">
    <property type="entry name" value="Ribosomal_uL16"/>
</dbReference>
<dbReference type="InterPro" id="IPR000114">
    <property type="entry name" value="Ribosomal_uL16_bact-type"/>
</dbReference>
<dbReference type="InterPro" id="IPR020798">
    <property type="entry name" value="Ribosomal_uL16_CS"/>
</dbReference>
<dbReference type="InterPro" id="IPR016180">
    <property type="entry name" value="Ribosomal_uL16_dom"/>
</dbReference>
<dbReference type="InterPro" id="IPR036920">
    <property type="entry name" value="Ribosomal_uL16_sf"/>
</dbReference>
<dbReference type="NCBIfam" id="TIGR01164">
    <property type="entry name" value="rplP_bact"/>
    <property type="match status" value="1"/>
</dbReference>
<dbReference type="PANTHER" id="PTHR12220">
    <property type="entry name" value="50S/60S RIBOSOMAL PROTEIN L16"/>
    <property type="match status" value="1"/>
</dbReference>
<dbReference type="PANTHER" id="PTHR12220:SF13">
    <property type="entry name" value="LARGE RIBOSOMAL SUBUNIT PROTEIN UL16M"/>
    <property type="match status" value="1"/>
</dbReference>
<dbReference type="Pfam" id="PF00252">
    <property type="entry name" value="Ribosomal_L16"/>
    <property type="match status" value="1"/>
</dbReference>
<dbReference type="PRINTS" id="PR00060">
    <property type="entry name" value="RIBOSOMALL16"/>
</dbReference>
<dbReference type="SUPFAM" id="SSF54686">
    <property type="entry name" value="Ribosomal protein L16p/L10e"/>
    <property type="match status" value="1"/>
</dbReference>
<dbReference type="PROSITE" id="PS00586">
    <property type="entry name" value="RIBOSOMAL_L16_1"/>
    <property type="match status" value="1"/>
</dbReference>
<dbReference type="PROSITE" id="PS00701">
    <property type="entry name" value="RIBOSOMAL_L16_2"/>
    <property type="match status" value="1"/>
</dbReference>
<sequence length="137" mass="15401">MLQPKRTKFRKQMTGHNRGLAHRGSKVSFGEYALKATSRGRLTARQIESARRALTRHVKRGGKIWIRVFPDKPVTKKPLEVRMGKGKGGVEYWVAQIQPGKVLYEIEGVSEELAREAFALAAAKLPLATSFVKRTVM</sequence>
<proteinExistence type="inferred from homology"/>
<feature type="chain" id="PRO_1000054681" description="Large ribosomal subunit protein uL16">
    <location>
        <begin position="1"/>
        <end position="137"/>
    </location>
</feature>
<comment type="function">
    <text evidence="1">Binds 23S rRNA and is also seen to make contacts with the A and possibly P site tRNAs.</text>
</comment>
<comment type="subunit">
    <text evidence="1">Part of the 50S ribosomal subunit.</text>
</comment>
<comment type="similarity">
    <text evidence="1">Belongs to the universal ribosomal protein uL16 family.</text>
</comment>
<keyword id="KW-0687">Ribonucleoprotein</keyword>
<keyword id="KW-0689">Ribosomal protein</keyword>
<keyword id="KW-0694">RNA-binding</keyword>
<keyword id="KW-0699">rRNA-binding</keyword>
<keyword id="KW-0820">tRNA-binding</keyword>
<evidence type="ECO:0000255" key="1">
    <source>
        <dbReference type="HAMAP-Rule" id="MF_01342"/>
    </source>
</evidence>
<evidence type="ECO:0000305" key="2"/>
<accession>Q02T73</accession>
<protein>
    <recommendedName>
        <fullName evidence="1">Large ribosomal subunit protein uL16</fullName>
    </recommendedName>
    <alternativeName>
        <fullName evidence="2">50S ribosomal protein L16</fullName>
    </alternativeName>
</protein>
<name>RL16_PSEAB</name>
<gene>
    <name evidence="1" type="primary">rplP</name>
    <name type="ordered locus">PA14_08920</name>
</gene>